<keyword id="KW-0004">4Fe-4S</keyword>
<keyword id="KW-0408">Iron</keyword>
<keyword id="KW-0411">Iron-sulfur</keyword>
<keyword id="KW-0414">Isoprene biosynthesis</keyword>
<keyword id="KW-0479">Metal-binding</keyword>
<keyword id="KW-0560">Oxidoreductase</keyword>
<keyword id="KW-1185">Reference proteome</keyword>
<feature type="chain" id="PRO_1000021082" description="4-hydroxy-3-methylbut-2-enyl diphosphate reductase">
    <location>
        <begin position="1"/>
        <end position="311"/>
    </location>
</feature>
<feature type="active site" description="Proton donor" evidence="1">
    <location>
        <position position="126"/>
    </location>
</feature>
<feature type="binding site" evidence="1">
    <location>
        <position position="12"/>
    </location>
    <ligand>
        <name>[4Fe-4S] cluster</name>
        <dbReference type="ChEBI" id="CHEBI:49883"/>
    </ligand>
</feature>
<feature type="binding site" evidence="1">
    <location>
        <position position="41"/>
    </location>
    <ligand>
        <name>(2E)-4-hydroxy-3-methylbut-2-enyl diphosphate</name>
        <dbReference type="ChEBI" id="CHEBI:128753"/>
    </ligand>
</feature>
<feature type="binding site" evidence="1">
    <location>
        <position position="41"/>
    </location>
    <ligand>
        <name>dimethylallyl diphosphate</name>
        <dbReference type="ChEBI" id="CHEBI:57623"/>
    </ligand>
</feature>
<feature type="binding site" evidence="1">
    <location>
        <position position="41"/>
    </location>
    <ligand>
        <name>isopentenyl diphosphate</name>
        <dbReference type="ChEBI" id="CHEBI:128769"/>
    </ligand>
</feature>
<feature type="binding site" evidence="1">
    <location>
        <position position="74"/>
    </location>
    <ligand>
        <name>(2E)-4-hydroxy-3-methylbut-2-enyl diphosphate</name>
        <dbReference type="ChEBI" id="CHEBI:128753"/>
    </ligand>
</feature>
<feature type="binding site" evidence="1">
    <location>
        <position position="74"/>
    </location>
    <ligand>
        <name>dimethylallyl diphosphate</name>
        <dbReference type="ChEBI" id="CHEBI:57623"/>
    </ligand>
</feature>
<feature type="binding site" evidence="1">
    <location>
        <position position="74"/>
    </location>
    <ligand>
        <name>isopentenyl diphosphate</name>
        <dbReference type="ChEBI" id="CHEBI:128769"/>
    </ligand>
</feature>
<feature type="binding site" evidence="1">
    <location>
        <position position="96"/>
    </location>
    <ligand>
        <name>[4Fe-4S] cluster</name>
        <dbReference type="ChEBI" id="CHEBI:49883"/>
    </ligand>
</feature>
<feature type="binding site" evidence="1">
    <location>
        <position position="124"/>
    </location>
    <ligand>
        <name>(2E)-4-hydroxy-3-methylbut-2-enyl diphosphate</name>
        <dbReference type="ChEBI" id="CHEBI:128753"/>
    </ligand>
</feature>
<feature type="binding site" evidence="1">
    <location>
        <position position="124"/>
    </location>
    <ligand>
        <name>dimethylallyl diphosphate</name>
        <dbReference type="ChEBI" id="CHEBI:57623"/>
    </ligand>
</feature>
<feature type="binding site" evidence="1">
    <location>
        <position position="124"/>
    </location>
    <ligand>
        <name>isopentenyl diphosphate</name>
        <dbReference type="ChEBI" id="CHEBI:128769"/>
    </ligand>
</feature>
<feature type="binding site" evidence="1">
    <location>
        <position position="168"/>
    </location>
    <ligand>
        <name>(2E)-4-hydroxy-3-methylbut-2-enyl diphosphate</name>
        <dbReference type="ChEBI" id="CHEBI:128753"/>
    </ligand>
</feature>
<feature type="binding site" evidence="1">
    <location>
        <position position="198"/>
    </location>
    <ligand>
        <name>[4Fe-4S] cluster</name>
        <dbReference type="ChEBI" id="CHEBI:49883"/>
    </ligand>
</feature>
<feature type="binding site" evidence="1">
    <location>
        <position position="226"/>
    </location>
    <ligand>
        <name>(2E)-4-hydroxy-3-methylbut-2-enyl diphosphate</name>
        <dbReference type="ChEBI" id="CHEBI:128753"/>
    </ligand>
</feature>
<feature type="binding site" evidence="1">
    <location>
        <position position="226"/>
    </location>
    <ligand>
        <name>dimethylallyl diphosphate</name>
        <dbReference type="ChEBI" id="CHEBI:57623"/>
    </ligand>
</feature>
<feature type="binding site" evidence="1">
    <location>
        <position position="226"/>
    </location>
    <ligand>
        <name>isopentenyl diphosphate</name>
        <dbReference type="ChEBI" id="CHEBI:128769"/>
    </ligand>
</feature>
<feature type="binding site" evidence="1">
    <location>
        <position position="227"/>
    </location>
    <ligand>
        <name>(2E)-4-hydroxy-3-methylbut-2-enyl diphosphate</name>
        <dbReference type="ChEBI" id="CHEBI:128753"/>
    </ligand>
</feature>
<feature type="binding site" evidence="1">
    <location>
        <position position="227"/>
    </location>
    <ligand>
        <name>dimethylallyl diphosphate</name>
        <dbReference type="ChEBI" id="CHEBI:57623"/>
    </ligand>
</feature>
<feature type="binding site" evidence="1">
    <location>
        <position position="227"/>
    </location>
    <ligand>
        <name>isopentenyl diphosphate</name>
        <dbReference type="ChEBI" id="CHEBI:128769"/>
    </ligand>
</feature>
<feature type="binding site" evidence="1">
    <location>
        <position position="228"/>
    </location>
    <ligand>
        <name>(2E)-4-hydroxy-3-methylbut-2-enyl diphosphate</name>
        <dbReference type="ChEBI" id="CHEBI:128753"/>
    </ligand>
</feature>
<feature type="binding site" evidence="1">
    <location>
        <position position="228"/>
    </location>
    <ligand>
        <name>dimethylallyl diphosphate</name>
        <dbReference type="ChEBI" id="CHEBI:57623"/>
    </ligand>
</feature>
<feature type="binding site" evidence="1">
    <location>
        <position position="228"/>
    </location>
    <ligand>
        <name>isopentenyl diphosphate</name>
        <dbReference type="ChEBI" id="CHEBI:128769"/>
    </ligand>
</feature>
<feature type="binding site" evidence="1">
    <location>
        <position position="270"/>
    </location>
    <ligand>
        <name>(2E)-4-hydroxy-3-methylbut-2-enyl diphosphate</name>
        <dbReference type="ChEBI" id="CHEBI:128753"/>
    </ligand>
</feature>
<feature type="binding site" evidence="1">
    <location>
        <position position="270"/>
    </location>
    <ligand>
        <name>dimethylallyl diphosphate</name>
        <dbReference type="ChEBI" id="CHEBI:57623"/>
    </ligand>
</feature>
<feature type="binding site" evidence="1">
    <location>
        <position position="270"/>
    </location>
    <ligand>
        <name>isopentenyl diphosphate</name>
        <dbReference type="ChEBI" id="CHEBI:128769"/>
    </ligand>
</feature>
<comment type="function">
    <text evidence="1">Catalyzes the conversion of 1-hydroxy-2-methyl-2-(E)-butenyl 4-diphosphate (HMBPP) into a mixture of isopentenyl diphosphate (IPP) and dimethylallyl diphosphate (DMAPP). Acts in the terminal step of the DOXP/MEP pathway for isoprenoid precursor biosynthesis.</text>
</comment>
<comment type="catalytic activity">
    <reaction evidence="1">
        <text>isopentenyl diphosphate + 2 oxidized [2Fe-2S]-[ferredoxin] + H2O = (2E)-4-hydroxy-3-methylbut-2-enyl diphosphate + 2 reduced [2Fe-2S]-[ferredoxin] + 2 H(+)</text>
        <dbReference type="Rhea" id="RHEA:24488"/>
        <dbReference type="Rhea" id="RHEA-COMP:10000"/>
        <dbReference type="Rhea" id="RHEA-COMP:10001"/>
        <dbReference type="ChEBI" id="CHEBI:15377"/>
        <dbReference type="ChEBI" id="CHEBI:15378"/>
        <dbReference type="ChEBI" id="CHEBI:33737"/>
        <dbReference type="ChEBI" id="CHEBI:33738"/>
        <dbReference type="ChEBI" id="CHEBI:128753"/>
        <dbReference type="ChEBI" id="CHEBI:128769"/>
        <dbReference type="EC" id="1.17.7.4"/>
    </reaction>
</comment>
<comment type="catalytic activity">
    <reaction evidence="1">
        <text>dimethylallyl diphosphate + 2 oxidized [2Fe-2S]-[ferredoxin] + H2O = (2E)-4-hydroxy-3-methylbut-2-enyl diphosphate + 2 reduced [2Fe-2S]-[ferredoxin] + 2 H(+)</text>
        <dbReference type="Rhea" id="RHEA:24825"/>
        <dbReference type="Rhea" id="RHEA-COMP:10000"/>
        <dbReference type="Rhea" id="RHEA-COMP:10001"/>
        <dbReference type="ChEBI" id="CHEBI:15377"/>
        <dbReference type="ChEBI" id="CHEBI:15378"/>
        <dbReference type="ChEBI" id="CHEBI:33737"/>
        <dbReference type="ChEBI" id="CHEBI:33738"/>
        <dbReference type="ChEBI" id="CHEBI:57623"/>
        <dbReference type="ChEBI" id="CHEBI:128753"/>
        <dbReference type="EC" id="1.17.7.4"/>
    </reaction>
</comment>
<comment type="cofactor">
    <cofactor evidence="1">
        <name>[4Fe-4S] cluster</name>
        <dbReference type="ChEBI" id="CHEBI:49883"/>
    </cofactor>
    <text evidence="1">Binds 1 [4Fe-4S] cluster per subunit.</text>
</comment>
<comment type="pathway">
    <text evidence="1">Isoprenoid biosynthesis; dimethylallyl diphosphate biosynthesis; dimethylallyl diphosphate from (2E)-4-hydroxy-3-methylbutenyl diphosphate: step 1/1.</text>
</comment>
<comment type="pathway">
    <text evidence="1">Isoprenoid biosynthesis; isopentenyl diphosphate biosynthesis via DXP pathway; isopentenyl diphosphate from 1-deoxy-D-xylulose 5-phosphate: step 6/6.</text>
</comment>
<comment type="similarity">
    <text evidence="1">Belongs to the IspH family.</text>
</comment>
<dbReference type="EC" id="1.17.7.4" evidence="1"/>
<dbReference type="EMBL" id="AM286690">
    <property type="protein sequence ID" value="CAL15910.1"/>
    <property type="molecule type" value="Genomic_DNA"/>
</dbReference>
<dbReference type="RefSeq" id="WP_011587748.1">
    <property type="nucleotide sequence ID" value="NC_008260.1"/>
</dbReference>
<dbReference type="SMR" id="Q0VSD8"/>
<dbReference type="STRING" id="393595.ABO_0462"/>
<dbReference type="KEGG" id="abo:ABO_0462"/>
<dbReference type="eggNOG" id="COG0761">
    <property type="taxonomic scope" value="Bacteria"/>
</dbReference>
<dbReference type="HOGENOM" id="CLU_027486_1_0_6"/>
<dbReference type="OrthoDB" id="9804068at2"/>
<dbReference type="UniPathway" id="UPA00056">
    <property type="reaction ID" value="UER00097"/>
</dbReference>
<dbReference type="UniPathway" id="UPA00059">
    <property type="reaction ID" value="UER00105"/>
</dbReference>
<dbReference type="Proteomes" id="UP000008871">
    <property type="component" value="Chromosome"/>
</dbReference>
<dbReference type="GO" id="GO:0051539">
    <property type="term" value="F:4 iron, 4 sulfur cluster binding"/>
    <property type="evidence" value="ECO:0007669"/>
    <property type="project" value="UniProtKB-UniRule"/>
</dbReference>
<dbReference type="GO" id="GO:0051745">
    <property type="term" value="F:4-hydroxy-3-methylbut-2-enyl diphosphate reductase activity"/>
    <property type="evidence" value="ECO:0007669"/>
    <property type="project" value="UniProtKB-UniRule"/>
</dbReference>
<dbReference type="GO" id="GO:0046872">
    <property type="term" value="F:metal ion binding"/>
    <property type="evidence" value="ECO:0007669"/>
    <property type="project" value="UniProtKB-KW"/>
</dbReference>
<dbReference type="GO" id="GO:0050992">
    <property type="term" value="P:dimethylallyl diphosphate biosynthetic process"/>
    <property type="evidence" value="ECO:0007669"/>
    <property type="project" value="UniProtKB-UniRule"/>
</dbReference>
<dbReference type="GO" id="GO:0019288">
    <property type="term" value="P:isopentenyl diphosphate biosynthetic process, methylerythritol 4-phosphate pathway"/>
    <property type="evidence" value="ECO:0007669"/>
    <property type="project" value="UniProtKB-UniRule"/>
</dbReference>
<dbReference type="GO" id="GO:0016114">
    <property type="term" value="P:terpenoid biosynthetic process"/>
    <property type="evidence" value="ECO:0007669"/>
    <property type="project" value="UniProtKB-UniRule"/>
</dbReference>
<dbReference type="CDD" id="cd13944">
    <property type="entry name" value="lytB_ispH"/>
    <property type="match status" value="1"/>
</dbReference>
<dbReference type="Gene3D" id="3.40.50.11270">
    <property type="match status" value="1"/>
</dbReference>
<dbReference type="Gene3D" id="3.40.1010.20">
    <property type="entry name" value="4-hydroxy-3-methylbut-2-enyl diphosphate reductase, catalytic domain"/>
    <property type="match status" value="2"/>
</dbReference>
<dbReference type="HAMAP" id="MF_00191">
    <property type="entry name" value="IspH"/>
    <property type="match status" value="1"/>
</dbReference>
<dbReference type="InterPro" id="IPR003451">
    <property type="entry name" value="LytB/IspH"/>
</dbReference>
<dbReference type="NCBIfam" id="TIGR00216">
    <property type="entry name" value="ispH_lytB"/>
    <property type="match status" value="1"/>
</dbReference>
<dbReference type="NCBIfam" id="NF002188">
    <property type="entry name" value="PRK01045.1-2"/>
    <property type="match status" value="1"/>
</dbReference>
<dbReference type="NCBIfam" id="NF002190">
    <property type="entry name" value="PRK01045.1-4"/>
    <property type="match status" value="1"/>
</dbReference>
<dbReference type="PANTHER" id="PTHR30426">
    <property type="entry name" value="4-HYDROXY-3-METHYLBUT-2-ENYL DIPHOSPHATE REDUCTASE"/>
    <property type="match status" value="1"/>
</dbReference>
<dbReference type="PANTHER" id="PTHR30426:SF0">
    <property type="entry name" value="4-HYDROXY-3-METHYLBUT-2-ENYL DIPHOSPHATE REDUCTASE"/>
    <property type="match status" value="1"/>
</dbReference>
<dbReference type="Pfam" id="PF02401">
    <property type="entry name" value="LYTB"/>
    <property type="match status" value="1"/>
</dbReference>
<sequence length="311" mass="34259">MQIRLANPRGFCAGVDRAIDIVNRALEVFGPPIHVRHEVVHNRYVVEDLRQRGAVFVEELHEVPDDAIVIFSAHGVSKAVQEEAKRRQLQVFDATCPLVTKVHMEVIRYAREGRESILIGHAGHPEVEGTMGQYDKSYGGDIYLVEDEADVVALTVRDESKLAFVTQTTLSVDDTARVIDALRQRFPAIIGPKREDICYATTNRQDAVRQLALECGLVLVVGSVNSSNSNRLRELAERCGAEAYLIDEPSQIEASWLKGKAAVGVTAGASAPEDLVQQVIATLKNLGGEDAEEIPGREENIRFSMPKALRP</sequence>
<reference key="1">
    <citation type="journal article" date="2006" name="Nat. Biotechnol.">
        <title>Genome sequence of the ubiquitous hydrocarbon-degrading marine bacterium Alcanivorax borkumensis.</title>
        <authorList>
            <person name="Schneiker S."/>
            <person name="Martins dos Santos V.A.P."/>
            <person name="Bartels D."/>
            <person name="Bekel T."/>
            <person name="Brecht M."/>
            <person name="Buhrmester J."/>
            <person name="Chernikova T.N."/>
            <person name="Denaro R."/>
            <person name="Ferrer M."/>
            <person name="Gertler C."/>
            <person name="Goesmann A."/>
            <person name="Golyshina O.V."/>
            <person name="Kaminski F."/>
            <person name="Khachane A.N."/>
            <person name="Lang S."/>
            <person name="Linke B."/>
            <person name="McHardy A.C."/>
            <person name="Meyer F."/>
            <person name="Nechitaylo T."/>
            <person name="Puehler A."/>
            <person name="Regenhardt D."/>
            <person name="Rupp O."/>
            <person name="Sabirova J.S."/>
            <person name="Selbitschka W."/>
            <person name="Yakimov M.M."/>
            <person name="Timmis K.N."/>
            <person name="Vorhoelter F.-J."/>
            <person name="Weidner S."/>
            <person name="Kaiser O."/>
            <person name="Golyshin P.N."/>
        </authorList>
    </citation>
    <scope>NUCLEOTIDE SEQUENCE [LARGE SCALE GENOMIC DNA]</scope>
    <source>
        <strain>ATCC 700651 / DSM 11573 / NCIMB 13689 / SK2</strain>
    </source>
</reference>
<name>ISPH_ALCBS</name>
<accession>Q0VSD8</accession>
<proteinExistence type="inferred from homology"/>
<protein>
    <recommendedName>
        <fullName evidence="1">4-hydroxy-3-methylbut-2-enyl diphosphate reductase</fullName>
        <shortName evidence="1">HMBPP reductase</shortName>
        <ecNumber evidence="1">1.17.7.4</ecNumber>
    </recommendedName>
</protein>
<organism>
    <name type="scientific">Alcanivorax borkumensis (strain ATCC 700651 / DSM 11573 / NCIMB 13689 / SK2)</name>
    <dbReference type="NCBI Taxonomy" id="393595"/>
    <lineage>
        <taxon>Bacteria</taxon>
        <taxon>Pseudomonadati</taxon>
        <taxon>Pseudomonadota</taxon>
        <taxon>Gammaproteobacteria</taxon>
        <taxon>Oceanospirillales</taxon>
        <taxon>Alcanivoracaceae</taxon>
        <taxon>Alcanivorax</taxon>
    </lineage>
</organism>
<evidence type="ECO:0000255" key="1">
    <source>
        <dbReference type="HAMAP-Rule" id="MF_00191"/>
    </source>
</evidence>
<gene>
    <name evidence="1" type="primary">ispH</name>
    <name type="ordered locus">ABO_0462</name>
</gene>